<feature type="chain" id="PRO_1000092206" description="Sulfate adenylyltransferase subunit 2">
    <location>
        <begin position="1"/>
        <end position="301"/>
    </location>
</feature>
<organism>
    <name type="scientific">Trichlorobacter lovleyi (strain ATCC BAA-1151 / DSM 17278 / SZ)</name>
    <name type="common">Geobacter lovleyi</name>
    <dbReference type="NCBI Taxonomy" id="398767"/>
    <lineage>
        <taxon>Bacteria</taxon>
        <taxon>Pseudomonadati</taxon>
        <taxon>Thermodesulfobacteriota</taxon>
        <taxon>Desulfuromonadia</taxon>
        <taxon>Geobacterales</taxon>
        <taxon>Geobacteraceae</taxon>
        <taxon>Trichlorobacter</taxon>
    </lineage>
</organism>
<name>CYSD_TRIL1</name>
<comment type="function">
    <text evidence="1">With CysN forms the ATP sulfurylase (ATPS) that catalyzes the adenylation of sulfate producing adenosine 5'-phosphosulfate (APS) and diphosphate, the first enzymatic step in sulfur assimilation pathway. APS synthesis involves the formation of a high-energy phosphoric-sulfuric acid anhydride bond driven by GTP hydrolysis by CysN coupled to ATP hydrolysis by CysD.</text>
</comment>
<comment type="catalytic activity">
    <reaction evidence="1">
        <text>sulfate + ATP + H(+) = adenosine 5'-phosphosulfate + diphosphate</text>
        <dbReference type="Rhea" id="RHEA:18133"/>
        <dbReference type="ChEBI" id="CHEBI:15378"/>
        <dbReference type="ChEBI" id="CHEBI:16189"/>
        <dbReference type="ChEBI" id="CHEBI:30616"/>
        <dbReference type="ChEBI" id="CHEBI:33019"/>
        <dbReference type="ChEBI" id="CHEBI:58243"/>
        <dbReference type="EC" id="2.7.7.4"/>
    </reaction>
</comment>
<comment type="pathway">
    <text evidence="1">Sulfur metabolism; hydrogen sulfide biosynthesis; sulfite from sulfate: step 1/3.</text>
</comment>
<comment type="subunit">
    <text evidence="1">Heterodimer composed of CysD, the smaller subunit, and CysN.</text>
</comment>
<comment type="similarity">
    <text evidence="1">Belongs to the PAPS reductase family. CysD subfamily.</text>
</comment>
<protein>
    <recommendedName>
        <fullName evidence="1">Sulfate adenylyltransferase subunit 2</fullName>
        <ecNumber evidence="1">2.7.7.4</ecNumber>
    </recommendedName>
    <alternativeName>
        <fullName evidence="1">ATP-sulfurylase small subunit</fullName>
    </alternativeName>
    <alternativeName>
        <fullName evidence="1">Sulfate adenylate transferase</fullName>
        <shortName evidence="1">SAT</shortName>
    </alternativeName>
</protein>
<sequence length="301" mass="34968">MYLNMTHLRQLESESIHIIREVVSECENPVMLYSIGKDSSVMLHLALKAFYPAKPSFPLMHIDTTWKFREMISFRDQMASEYGFDLLVHINQDGVDQGISPFKHGSALYTDIMKTEGLKQALSKYKFDAAFGGARRDEEKSRAKERIFSFRSANHGWDPKNQRPELWNLYNTRVNPGENIRVFPLSNWTELDVWQYIYLEQIPIVPLYFAKQRPVVKRNGMLILLDDERLKLQPGEQVQMKPVRFRTLGCYPLTGAIESTAATLPEIIQEMLLTRTSERQGRLIDHDQAGSMEKKKQEGYF</sequence>
<proteinExistence type="inferred from homology"/>
<keyword id="KW-0067">ATP-binding</keyword>
<keyword id="KW-0547">Nucleotide-binding</keyword>
<keyword id="KW-0548">Nucleotidyltransferase</keyword>
<keyword id="KW-1185">Reference proteome</keyword>
<keyword id="KW-0808">Transferase</keyword>
<dbReference type="EC" id="2.7.7.4" evidence="1"/>
<dbReference type="EMBL" id="CP001089">
    <property type="protein sequence ID" value="ACD95247.1"/>
    <property type="molecule type" value="Genomic_DNA"/>
</dbReference>
<dbReference type="RefSeq" id="WP_012469589.1">
    <property type="nucleotide sequence ID" value="NC_010814.1"/>
</dbReference>
<dbReference type="SMR" id="B3E8X9"/>
<dbReference type="STRING" id="398767.Glov_1531"/>
<dbReference type="KEGG" id="glo:Glov_1531"/>
<dbReference type="eggNOG" id="COG0175">
    <property type="taxonomic scope" value="Bacteria"/>
</dbReference>
<dbReference type="HOGENOM" id="CLU_043026_0_0_7"/>
<dbReference type="OrthoDB" id="9772604at2"/>
<dbReference type="UniPathway" id="UPA00140">
    <property type="reaction ID" value="UER00204"/>
</dbReference>
<dbReference type="Proteomes" id="UP000002420">
    <property type="component" value="Chromosome"/>
</dbReference>
<dbReference type="GO" id="GO:0005524">
    <property type="term" value="F:ATP binding"/>
    <property type="evidence" value="ECO:0007669"/>
    <property type="project" value="UniProtKB-KW"/>
</dbReference>
<dbReference type="GO" id="GO:0004781">
    <property type="term" value="F:sulfate adenylyltransferase (ATP) activity"/>
    <property type="evidence" value="ECO:0007669"/>
    <property type="project" value="UniProtKB-UniRule"/>
</dbReference>
<dbReference type="GO" id="GO:0070814">
    <property type="term" value="P:hydrogen sulfide biosynthetic process"/>
    <property type="evidence" value="ECO:0007669"/>
    <property type="project" value="UniProtKB-UniRule"/>
</dbReference>
<dbReference type="GO" id="GO:0000103">
    <property type="term" value="P:sulfate assimilation"/>
    <property type="evidence" value="ECO:0007669"/>
    <property type="project" value="UniProtKB-UniRule"/>
</dbReference>
<dbReference type="CDD" id="cd23946">
    <property type="entry name" value="Sulfate_adenylyltransferase_2"/>
    <property type="match status" value="1"/>
</dbReference>
<dbReference type="FunFam" id="3.40.50.620:FF:000002">
    <property type="entry name" value="Sulfate adenylyltransferase subunit 2"/>
    <property type="match status" value="1"/>
</dbReference>
<dbReference type="Gene3D" id="3.40.50.620">
    <property type="entry name" value="HUPs"/>
    <property type="match status" value="1"/>
</dbReference>
<dbReference type="HAMAP" id="MF_00064">
    <property type="entry name" value="Sulf_adenylyltr_sub2"/>
    <property type="match status" value="1"/>
</dbReference>
<dbReference type="InterPro" id="IPR002500">
    <property type="entry name" value="PAPS_reduct_dom"/>
</dbReference>
<dbReference type="InterPro" id="IPR014729">
    <property type="entry name" value="Rossmann-like_a/b/a_fold"/>
</dbReference>
<dbReference type="InterPro" id="IPR011784">
    <property type="entry name" value="SO4_adenylTrfase_ssu"/>
</dbReference>
<dbReference type="InterPro" id="IPR050128">
    <property type="entry name" value="Sulfate_adenylyltrnsfr_sub2"/>
</dbReference>
<dbReference type="NCBIfam" id="TIGR02039">
    <property type="entry name" value="CysD"/>
    <property type="match status" value="1"/>
</dbReference>
<dbReference type="NCBIfam" id="NF003587">
    <property type="entry name" value="PRK05253.1"/>
    <property type="match status" value="1"/>
</dbReference>
<dbReference type="NCBIfam" id="NF009214">
    <property type="entry name" value="PRK12563.1"/>
    <property type="match status" value="1"/>
</dbReference>
<dbReference type="PANTHER" id="PTHR43196">
    <property type="entry name" value="SULFATE ADENYLYLTRANSFERASE SUBUNIT 2"/>
    <property type="match status" value="1"/>
</dbReference>
<dbReference type="PANTHER" id="PTHR43196:SF1">
    <property type="entry name" value="SULFATE ADENYLYLTRANSFERASE SUBUNIT 2"/>
    <property type="match status" value="1"/>
</dbReference>
<dbReference type="Pfam" id="PF01507">
    <property type="entry name" value="PAPS_reduct"/>
    <property type="match status" value="1"/>
</dbReference>
<dbReference type="PIRSF" id="PIRSF002936">
    <property type="entry name" value="CysDAde_trans"/>
    <property type="match status" value="1"/>
</dbReference>
<dbReference type="SUPFAM" id="SSF52402">
    <property type="entry name" value="Adenine nucleotide alpha hydrolases-like"/>
    <property type="match status" value="1"/>
</dbReference>
<accession>B3E8X9</accession>
<gene>
    <name evidence="1" type="primary">cysD</name>
    <name type="ordered locus">Glov_1531</name>
</gene>
<evidence type="ECO:0000255" key="1">
    <source>
        <dbReference type="HAMAP-Rule" id="MF_00064"/>
    </source>
</evidence>
<reference key="1">
    <citation type="submission" date="2008-05" db="EMBL/GenBank/DDBJ databases">
        <title>Complete sequence of chromosome of Geobacter lovleyi SZ.</title>
        <authorList>
            <consortium name="US DOE Joint Genome Institute"/>
            <person name="Lucas S."/>
            <person name="Copeland A."/>
            <person name="Lapidus A."/>
            <person name="Glavina del Rio T."/>
            <person name="Dalin E."/>
            <person name="Tice H."/>
            <person name="Bruce D."/>
            <person name="Goodwin L."/>
            <person name="Pitluck S."/>
            <person name="Chertkov O."/>
            <person name="Meincke L."/>
            <person name="Brettin T."/>
            <person name="Detter J.C."/>
            <person name="Han C."/>
            <person name="Tapia R."/>
            <person name="Kuske C.R."/>
            <person name="Schmutz J."/>
            <person name="Larimer F."/>
            <person name="Land M."/>
            <person name="Hauser L."/>
            <person name="Kyrpides N."/>
            <person name="Mikhailova N."/>
            <person name="Sung Y."/>
            <person name="Fletcher K.E."/>
            <person name="Ritalahti K.M."/>
            <person name="Loeffler F.E."/>
            <person name="Richardson P."/>
        </authorList>
    </citation>
    <scope>NUCLEOTIDE SEQUENCE [LARGE SCALE GENOMIC DNA]</scope>
    <source>
        <strain>ATCC BAA-1151 / DSM 17278 / SZ</strain>
    </source>
</reference>